<keyword id="KW-0414">Isoprene biosynthesis</keyword>
<keyword id="KW-0460">Magnesium</keyword>
<keyword id="KW-0479">Metal-binding</keyword>
<keyword id="KW-1185">Reference proteome</keyword>
<keyword id="KW-0784">Thiamine biosynthesis</keyword>
<keyword id="KW-0786">Thiamine pyrophosphate</keyword>
<keyword id="KW-0808">Transferase</keyword>
<comment type="function">
    <text evidence="1">Catalyzes the acyloin condensation reaction between C atoms 2 and 3 of pyruvate and glyceraldehyde 3-phosphate to yield 1-deoxy-D-xylulose-5-phosphate (DXP).</text>
</comment>
<comment type="catalytic activity">
    <reaction evidence="1">
        <text>D-glyceraldehyde 3-phosphate + pyruvate + H(+) = 1-deoxy-D-xylulose 5-phosphate + CO2</text>
        <dbReference type="Rhea" id="RHEA:12605"/>
        <dbReference type="ChEBI" id="CHEBI:15361"/>
        <dbReference type="ChEBI" id="CHEBI:15378"/>
        <dbReference type="ChEBI" id="CHEBI:16526"/>
        <dbReference type="ChEBI" id="CHEBI:57792"/>
        <dbReference type="ChEBI" id="CHEBI:59776"/>
        <dbReference type="EC" id="2.2.1.7"/>
    </reaction>
</comment>
<comment type="cofactor">
    <cofactor evidence="1">
        <name>Mg(2+)</name>
        <dbReference type="ChEBI" id="CHEBI:18420"/>
    </cofactor>
    <text evidence="1">Binds 1 Mg(2+) ion per subunit.</text>
</comment>
<comment type="cofactor">
    <cofactor evidence="1">
        <name>thiamine diphosphate</name>
        <dbReference type="ChEBI" id="CHEBI:58937"/>
    </cofactor>
    <text evidence="1">Binds 1 thiamine pyrophosphate per subunit.</text>
</comment>
<comment type="pathway">
    <text evidence="1">Metabolic intermediate biosynthesis; 1-deoxy-D-xylulose 5-phosphate biosynthesis; 1-deoxy-D-xylulose 5-phosphate from D-glyceraldehyde 3-phosphate and pyruvate: step 1/1.</text>
</comment>
<comment type="subunit">
    <text evidence="1">Homodimer.</text>
</comment>
<comment type="similarity">
    <text evidence="1">Belongs to the transketolase family. DXPS subfamily.</text>
</comment>
<name>DXS2_GEOSL</name>
<reference key="1">
    <citation type="journal article" date="2003" name="Science">
        <title>Genome of Geobacter sulfurreducens: metal reduction in subsurface environments.</title>
        <authorList>
            <person name="Methe B.A."/>
            <person name="Nelson K.E."/>
            <person name="Eisen J.A."/>
            <person name="Paulsen I.T."/>
            <person name="Nelson W.C."/>
            <person name="Heidelberg J.F."/>
            <person name="Wu D."/>
            <person name="Wu M."/>
            <person name="Ward N.L."/>
            <person name="Beanan M.J."/>
            <person name="Dodson R.J."/>
            <person name="Madupu R."/>
            <person name="Brinkac L.M."/>
            <person name="Daugherty S.C."/>
            <person name="DeBoy R.T."/>
            <person name="Durkin A.S."/>
            <person name="Gwinn M.L."/>
            <person name="Kolonay J.F."/>
            <person name="Sullivan S.A."/>
            <person name="Haft D.H."/>
            <person name="Selengut J."/>
            <person name="Davidsen T.M."/>
            <person name="Zafar N."/>
            <person name="White O."/>
            <person name="Tran B."/>
            <person name="Romero C."/>
            <person name="Forberger H.A."/>
            <person name="Weidman J.F."/>
            <person name="Khouri H.M."/>
            <person name="Feldblyum T.V."/>
            <person name="Utterback T.R."/>
            <person name="Van Aken S.E."/>
            <person name="Lovley D.R."/>
            <person name="Fraser C.M."/>
        </authorList>
    </citation>
    <scope>NUCLEOTIDE SEQUENCE [LARGE SCALE GENOMIC DNA]</scope>
    <source>
        <strain>ATCC 51573 / DSM 12127 / PCA</strain>
    </source>
</reference>
<proteinExistence type="inferred from homology"/>
<sequence length="626" mass="66831">MSRILDRVDSPSDLKGLTTAELGILAEEIRQEIITVCSRNGGHLAPSLGVVELTLALHRVFTSPEDKIVWDVGHQAYAHKLVTGRRDRFATLRTLGGISGFLKRAESPHDVFDAGHASTSISAALGLAAARDLAGRNNKVVAVIGDGSMTGGIAYEGLNHAGHLNRDLVVVLNDNEMSIAENVGALSNFLSRTVTSEFVHTLKKDVETFLGGLDRIGRNVLKVAKRAEESLKGLFTPGMLFEAFGFEYIGPIDGHDIGRLTETFEKVKRFDDAVLIHVLTKKGKGFAPAEAKPSLFHGVGPFDPVSGEIVKGKGGATSYTGVFGQALTRIADEDERVVAITAAMPDGTGLGSFSARHPGRFFDVGIAEQHGVTFAAGLAAEGYRPVFAIYSSFLQRAYDQLFHDVCLMNLPVTFAIDRSGVVGSDGPTHHGLFDLSYLRTLPNMVVMAPKDENELQHMLKTAIDHNGPAAVRYPRGNGLGVPLDQSLAPIPLGTSEVLRAGSGTCVVLAVGAMVGPALEAANTLEGEGIDLTVVNVRFVKPLDRELILSYVGRAGTLVTIEENVLQGGFGSAVLELLADEGVGGVAVHRFGYPDRYVEQGEQHELRSRYGLDAEGIAGRIRTLSAR</sequence>
<feature type="chain" id="PRO_0000256425" description="1-deoxy-D-xylulose-5-phosphate synthase 2">
    <location>
        <begin position="1"/>
        <end position="626"/>
    </location>
</feature>
<feature type="binding site" evidence="1">
    <location>
        <position position="74"/>
    </location>
    <ligand>
        <name>thiamine diphosphate</name>
        <dbReference type="ChEBI" id="CHEBI:58937"/>
    </ligand>
</feature>
<feature type="binding site" evidence="1">
    <location>
        <begin position="115"/>
        <end position="117"/>
    </location>
    <ligand>
        <name>thiamine diphosphate</name>
        <dbReference type="ChEBI" id="CHEBI:58937"/>
    </ligand>
</feature>
<feature type="binding site" evidence="1">
    <location>
        <position position="146"/>
    </location>
    <ligand>
        <name>Mg(2+)</name>
        <dbReference type="ChEBI" id="CHEBI:18420"/>
    </ligand>
</feature>
<feature type="binding site" evidence="1">
    <location>
        <begin position="147"/>
        <end position="148"/>
    </location>
    <ligand>
        <name>thiamine diphosphate</name>
        <dbReference type="ChEBI" id="CHEBI:58937"/>
    </ligand>
</feature>
<feature type="binding site" evidence="1">
    <location>
        <position position="175"/>
    </location>
    <ligand>
        <name>Mg(2+)</name>
        <dbReference type="ChEBI" id="CHEBI:18420"/>
    </ligand>
</feature>
<feature type="binding site" evidence="1">
    <location>
        <position position="175"/>
    </location>
    <ligand>
        <name>thiamine diphosphate</name>
        <dbReference type="ChEBI" id="CHEBI:58937"/>
    </ligand>
</feature>
<feature type="binding site" evidence="1">
    <location>
        <position position="286"/>
    </location>
    <ligand>
        <name>thiamine diphosphate</name>
        <dbReference type="ChEBI" id="CHEBI:58937"/>
    </ligand>
</feature>
<feature type="binding site" evidence="1">
    <location>
        <position position="368"/>
    </location>
    <ligand>
        <name>thiamine diphosphate</name>
        <dbReference type="ChEBI" id="CHEBI:58937"/>
    </ligand>
</feature>
<organism>
    <name type="scientific">Geobacter sulfurreducens (strain ATCC 51573 / DSM 12127 / PCA)</name>
    <dbReference type="NCBI Taxonomy" id="243231"/>
    <lineage>
        <taxon>Bacteria</taxon>
        <taxon>Pseudomonadati</taxon>
        <taxon>Thermodesulfobacteriota</taxon>
        <taxon>Desulfuromonadia</taxon>
        <taxon>Geobacterales</taxon>
        <taxon>Geobacteraceae</taxon>
        <taxon>Geobacter</taxon>
    </lineage>
</organism>
<gene>
    <name evidence="1" type="primary">dxs2</name>
    <name type="ordered locus">GSU1764</name>
</gene>
<evidence type="ECO:0000255" key="1">
    <source>
        <dbReference type="HAMAP-Rule" id="MF_00315"/>
    </source>
</evidence>
<protein>
    <recommendedName>
        <fullName evidence="1">1-deoxy-D-xylulose-5-phosphate synthase 2</fullName>
        <ecNumber evidence="1">2.2.1.7</ecNumber>
    </recommendedName>
    <alternativeName>
        <fullName evidence="1">1-deoxyxylulose-5-phosphate synthase 2</fullName>
        <shortName evidence="1">DXP synthase 2</shortName>
        <shortName evidence="1">DXPS 2</shortName>
    </alternativeName>
</protein>
<dbReference type="EC" id="2.2.1.7" evidence="1"/>
<dbReference type="EMBL" id="AE017180">
    <property type="protein sequence ID" value="AAR35141.1"/>
    <property type="molecule type" value="Genomic_DNA"/>
</dbReference>
<dbReference type="RefSeq" id="NP_952814.1">
    <property type="nucleotide sequence ID" value="NC_002939.5"/>
</dbReference>
<dbReference type="SMR" id="Q74CB0"/>
<dbReference type="FunCoup" id="Q74CB0">
    <property type="interactions" value="532"/>
</dbReference>
<dbReference type="STRING" id="243231.GSU1764"/>
<dbReference type="EnsemblBacteria" id="AAR35141">
    <property type="protein sequence ID" value="AAR35141"/>
    <property type="gene ID" value="GSU1764"/>
</dbReference>
<dbReference type="KEGG" id="gsu:GSU1764"/>
<dbReference type="PATRIC" id="fig|243231.5.peg.1803"/>
<dbReference type="eggNOG" id="COG1154">
    <property type="taxonomic scope" value="Bacteria"/>
</dbReference>
<dbReference type="HOGENOM" id="CLU_009227_1_4_7"/>
<dbReference type="InParanoid" id="Q74CB0"/>
<dbReference type="OrthoDB" id="9803371at2"/>
<dbReference type="UniPathway" id="UPA00064">
    <property type="reaction ID" value="UER00091"/>
</dbReference>
<dbReference type="Proteomes" id="UP000000577">
    <property type="component" value="Chromosome"/>
</dbReference>
<dbReference type="GO" id="GO:0005829">
    <property type="term" value="C:cytosol"/>
    <property type="evidence" value="ECO:0000318"/>
    <property type="project" value="GO_Central"/>
</dbReference>
<dbReference type="GO" id="GO:0008661">
    <property type="term" value="F:1-deoxy-D-xylulose-5-phosphate synthase activity"/>
    <property type="evidence" value="ECO:0000318"/>
    <property type="project" value="GO_Central"/>
</dbReference>
<dbReference type="GO" id="GO:0000287">
    <property type="term" value="F:magnesium ion binding"/>
    <property type="evidence" value="ECO:0007669"/>
    <property type="project" value="UniProtKB-UniRule"/>
</dbReference>
<dbReference type="GO" id="GO:0030976">
    <property type="term" value="F:thiamine pyrophosphate binding"/>
    <property type="evidence" value="ECO:0007669"/>
    <property type="project" value="UniProtKB-UniRule"/>
</dbReference>
<dbReference type="GO" id="GO:0052865">
    <property type="term" value="P:1-deoxy-D-xylulose 5-phosphate biosynthetic process"/>
    <property type="evidence" value="ECO:0007669"/>
    <property type="project" value="UniProtKB-UniPathway"/>
</dbReference>
<dbReference type="GO" id="GO:0019288">
    <property type="term" value="P:isopentenyl diphosphate biosynthetic process, methylerythritol 4-phosphate pathway"/>
    <property type="evidence" value="ECO:0000318"/>
    <property type="project" value="GO_Central"/>
</dbReference>
<dbReference type="GO" id="GO:0016114">
    <property type="term" value="P:terpenoid biosynthetic process"/>
    <property type="evidence" value="ECO:0007669"/>
    <property type="project" value="UniProtKB-UniRule"/>
</dbReference>
<dbReference type="GO" id="GO:0009228">
    <property type="term" value="P:thiamine biosynthetic process"/>
    <property type="evidence" value="ECO:0007669"/>
    <property type="project" value="UniProtKB-UniRule"/>
</dbReference>
<dbReference type="CDD" id="cd02007">
    <property type="entry name" value="TPP_DXS"/>
    <property type="match status" value="1"/>
</dbReference>
<dbReference type="CDD" id="cd07033">
    <property type="entry name" value="TPP_PYR_DXS_TK_like"/>
    <property type="match status" value="1"/>
</dbReference>
<dbReference type="FunFam" id="3.40.50.920:FF:000002">
    <property type="entry name" value="1-deoxy-D-xylulose-5-phosphate synthase"/>
    <property type="match status" value="1"/>
</dbReference>
<dbReference type="FunFam" id="3.40.50.970:FF:000005">
    <property type="entry name" value="1-deoxy-D-xylulose-5-phosphate synthase"/>
    <property type="match status" value="1"/>
</dbReference>
<dbReference type="Gene3D" id="3.40.50.920">
    <property type="match status" value="1"/>
</dbReference>
<dbReference type="Gene3D" id="3.40.50.970">
    <property type="match status" value="2"/>
</dbReference>
<dbReference type="HAMAP" id="MF_00315">
    <property type="entry name" value="DXP_synth"/>
    <property type="match status" value="1"/>
</dbReference>
<dbReference type="InterPro" id="IPR005477">
    <property type="entry name" value="Dxylulose-5-P_synthase"/>
</dbReference>
<dbReference type="InterPro" id="IPR029061">
    <property type="entry name" value="THDP-binding"/>
</dbReference>
<dbReference type="InterPro" id="IPR009014">
    <property type="entry name" value="Transketo_C/PFOR_II"/>
</dbReference>
<dbReference type="InterPro" id="IPR005475">
    <property type="entry name" value="Transketolase-like_Pyr-bd"/>
</dbReference>
<dbReference type="InterPro" id="IPR020826">
    <property type="entry name" value="Transketolase_BS"/>
</dbReference>
<dbReference type="InterPro" id="IPR033248">
    <property type="entry name" value="Transketolase_C"/>
</dbReference>
<dbReference type="InterPro" id="IPR049557">
    <property type="entry name" value="Transketolase_CS"/>
</dbReference>
<dbReference type="NCBIfam" id="TIGR00204">
    <property type="entry name" value="dxs"/>
    <property type="match status" value="1"/>
</dbReference>
<dbReference type="NCBIfam" id="NF003933">
    <property type="entry name" value="PRK05444.2-2"/>
    <property type="match status" value="1"/>
</dbReference>
<dbReference type="PANTHER" id="PTHR43322">
    <property type="entry name" value="1-D-DEOXYXYLULOSE 5-PHOSPHATE SYNTHASE-RELATED"/>
    <property type="match status" value="1"/>
</dbReference>
<dbReference type="PANTHER" id="PTHR43322:SF5">
    <property type="entry name" value="1-DEOXY-D-XYLULOSE-5-PHOSPHATE SYNTHASE, CHLOROPLASTIC"/>
    <property type="match status" value="1"/>
</dbReference>
<dbReference type="Pfam" id="PF13292">
    <property type="entry name" value="DXP_synthase_N"/>
    <property type="match status" value="1"/>
</dbReference>
<dbReference type="Pfam" id="PF02779">
    <property type="entry name" value="Transket_pyr"/>
    <property type="match status" value="1"/>
</dbReference>
<dbReference type="Pfam" id="PF02780">
    <property type="entry name" value="Transketolase_C"/>
    <property type="match status" value="1"/>
</dbReference>
<dbReference type="SMART" id="SM00861">
    <property type="entry name" value="Transket_pyr"/>
    <property type="match status" value="1"/>
</dbReference>
<dbReference type="SUPFAM" id="SSF52518">
    <property type="entry name" value="Thiamin diphosphate-binding fold (THDP-binding)"/>
    <property type="match status" value="2"/>
</dbReference>
<dbReference type="SUPFAM" id="SSF52922">
    <property type="entry name" value="TK C-terminal domain-like"/>
    <property type="match status" value="1"/>
</dbReference>
<dbReference type="PROSITE" id="PS00801">
    <property type="entry name" value="TRANSKETOLASE_1"/>
    <property type="match status" value="1"/>
</dbReference>
<dbReference type="PROSITE" id="PS00802">
    <property type="entry name" value="TRANSKETOLASE_2"/>
    <property type="match status" value="1"/>
</dbReference>
<accession>Q74CB0</accession>